<proteinExistence type="evidence at transcript level"/>
<protein>
    <recommendedName>
        <fullName>Kinesin-like protein KIF3C</fullName>
    </recommendedName>
</protein>
<sequence>MASKTKASEALKVVARCRPLSRKEEAAGHEQILTMDVKLGQVTLRNPRAAPGELPKTFTFDAVYDASSKQADLYDETVRPLIDSVLQGFNGTVFAYGQTGTGKTYTMQGTWVEPELRGVIPNAFEHIFTHISRSQNQQYLVRASYLEIYQEEIRDLLSKEPGKRLELKENPETGVYIKDLSSFVTKNVKEIEHVMNLGNQARAVGSTHMNEVSSRSHAIFVITVECSERGSDGQDHIRVGKLNLVDLAGSERQNKAGPNTPGGPATQSTAGGGGGGGGTSGSGSSGERPKEASKINLSLSALGNVIAALAGNRSTHIPYRDSKLTRLLQDSLGGNAKTIMVATLGPASHSYDESLSTLRFANRAKNIKNKPRVNEDPKDTLLREFQEEIARLKAQLEKKGMLGKRPRRKSSRRKKAVSAPAGYPEGAVIEAWVAEEEDDNNNNHRPPQPTLEAALEKNMENYLQEQKERLEEEKAAIQDDRSLVSEEKQKLLEEKEKMLEDLKREQQATELLAAKYKAMESKLLIGGRNIMDHTNEQQKMLELKRQEIAEQKRREREMQQEMLLRDEETMELRGTYSSLQQEVEVKTKKLKKLYAKLQAVKAEIQDQHEEYIRVRQDLEEAQNEQTRELKLKYLIIENFIPPEEKNKIMNRLFLDCEEEQWKFQPLVPAGVNNSQMKKRPTSAVGYKRPISQYARVAMAMGSHPRYRAENIMFLELDVSPPAIFEMEFSHDQEQDPRVLHMERLMRLDSFLERPSTSKVRKSRSWCQSPQRPPPPSTVHASMASAPLHPATVVDHD</sequence>
<feature type="chain" id="PRO_0000125399" description="Kinesin-like protein KIF3C">
    <location>
        <begin position="1"/>
        <end position="796"/>
    </location>
</feature>
<feature type="domain" description="Kinesin motor" evidence="2">
    <location>
        <begin position="10"/>
        <end position="367"/>
    </location>
</feature>
<feature type="region of interest" description="Disordered" evidence="3">
    <location>
        <begin position="251"/>
        <end position="292"/>
    </location>
</feature>
<feature type="region of interest" description="Disordered" evidence="3">
    <location>
        <begin position="397"/>
        <end position="421"/>
    </location>
</feature>
<feature type="region of interest" description="Globular" evidence="1">
    <location>
        <begin position="633"/>
        <end position="793"/>
    </location>
</feature>
<feature type="region of interest" description="Disordered" evidence="3">
    <location>
        <begin position="754"/>
        <end position="796"/>
    </location>
</feature>
<feature type="coiled-coil region" evidence="1">
    <location>
        <begin position="378"/>
        <end position="632"/>
    </location>
</feature>
<feature type="compositionally biased region" description="Gly residues" evidence="3">
    <location>
        <begin position="270"/>
        <end position="284"/>
    </location>
</feature>
<feature type="compositionally biased region" description="Basic residues" evidence="3">
    <location>
        <begin position="401"/>
        <end position="416"/>
    </location>
</feature>
<feature type="binding site" evidence="2">
    <location>
        <begin position="97"/>
        <end position="104"/>
    </location>
    <ligand>
        <name>ATP</name>
        <dbReference type="ChEBI" id="CHEBI:30616"/>
    </ligand>
</feature>
<feature type="sequence conflict" description="In Ref. 2; AAC33291." evidence="4" ref="2">
    <original>D</original>
    <variation>DD</variation>
    <location>
        <position position="352"/>
    </location>
</feature>
<feature type="sequence conflict" description="In Ref. 2; AAC33291." evidence="4" ref="2">
    <original>ML</original>
    <variation>IV</variation>
    <location>
        <begin position="562"/>
        <end position="563"/>
    </location>
</feature>
<gene>
    <name type="primary">Kif3c</name>
</gene>
<keyword id="KW-0067">ATP-binding</keyword>
<keyword id="KW-0175">Coiled coil</keyword>
<keyword id="KW-0963">Cytoplasm</keyword>
<keyword id="KW-0206">Cytoskeleton</keyword>
<keyword id="KW-0493">Microtubule</keyword>
<keyword id="KW-0505">Motor protein</keyword>
<keyword id="KW-0547">Nucleotide-binding</keyword>
<keyword id="KW-1185">Reference proteome</keyword>
<comment type="function">
    <text>Microtubule-based anterograde translocator for membranous organelles.</text>
</comment>
<comment type="subunit">
    <text>Heterodimer of KIF3A and KIF3C.</text>
</comment>
<comment type="subcellular location">
    <subcellularLocation>
        <location evidence="4">Cytoplasm</location>
        <location evidence="4">Cytoskeleton</location>
    </subcellularLocation>
</comment>
<comment type="similarity">
    <text evidence="2">Belongs to the TRAFAC class myosin-kinesin ATPase superfamily. Kinesin family. Kinesin II subfamily.</text>
</comment>
<evidence type="ECO:0000255" key="1"/>
<evidence type="ECO:0000255" key="2">
    <source>
        <dbReference type="PROSITE-ProRule" id="PRU00283"/>
    </source>
</evidence>
<evidence type="ECO:0000256" key="3">
    <source>
        <dbReference type="SAM" id="MobiDB-lite"/>
    </source>
</evidence>
<evidence type="ECO:0000305" key="4"/>
<organism>
    <name type="scientific">Rattus norvegicus</name>
    <name type="common">Rat</name>
    <dbReference type="NCBI Taxonomy" id="10116"/>
    <lineage>
        <taxon>Eukaryota</taxon>
        <taxon>Metazoa</taxon>
        <taxon>Chordata</taxon>
        <taxon>Craniata</taxon>
        <taxon>Vertebrata</taxon>
        <taxon>Euteleostomi</taxon>
        <taxon>Mammalia</taxon>
        <taxon>Eutheria</taxon>
        <taxon>Euarchontoglires</taxon>
        <taxon>Glires</taxon>
        <taxon>Rodentia</taxon>
        <taxon>Myomorpha</taxon>
        <taxon>Muroidea</taxon>
        <taxon>Muridae</taxon>
        <taxon>Murinae</taxon>
        <taxon>Rattus</taxon>
    </lineage>
</organism>
<name>KIF3C_RAT</name>
<dbReference type="EMBL" id="AJ223599">
    <property type="protein sequence ID" value="CAA11465.1"/>
    <property type="molecule type" value="mRNA"/>
</dbReference>
<dbReference type="EMBL" id="AF083330">
    <property type="protein sequence ID" value="AAC33291.1"/>
    <property type="molecule type" value="mRNA"/>
</dbReference>
<dbReference type="RefSeq" id="NP_445938.1">
    <property type="nucleotide sequence ID" value="NM_053486.1"/>
</dbReference>
<dbReference type="SMR" id="O55165"/>
<dbReference type="FunCoup" id="O55165">
    <property type="interactions" value="1545"/>
</dbReference>
<dbReference type="STRING" id="10116.ENSRNOP00000015820"/>
<dbReference type="iPTMnet" id="O55165"/>
<dbReference type="PhosphoSitePlus" id="O55165"/>
<dbReference type="PaxDb" id="10116-ENSRNOP00000015820"/>
<dbReference type="GeneID" id="85248"/>
<dbReference type="KEGG" id="rno:85248"/>
<dbReference type="AGR" id="RGD:621538"/>
<dbReference type="CTD" id="3797"/>
<dbReference type="RGD" id="621538">
    <property type="gene designation" value="Kif3c"/>
</dbReference>
<dbReference type="eggNOG" id="KOG4280">
    <property type="taxonomic scope" value="Eukaryota"/>
</dbReference>
<dbReference type="InParanoid" id="O55165"/>
<dbReference type="OrthoDB" id="65714at9989"/>
<dbReference type="PhylomeDB" id="O55165"/>
<dbReference type="Reactome" id="R-RNO-2132295">
    <property type="pathway name" value="MHC class II antigen presentation"/>
</dbReference>
<dbReference type="Reactome" id="R-RNO-5620924">
    <property type="pathway name" value="Intraflagellar transport"/>
</dbReference>
<dbReference type="Reactome" id="R-RNO-6811434">
    <property type="pathway name" value="COPI-dependent Golgi-to-ER retrograde traffic"/>
</dbReference>
<dbReference type="Reactome" id="R-RNO-983189">
    <property type="pathway name" value="Kinesins"/>
</dbReference>
<dbReference type="PRO" id="PR:O55165"/>
<dbReference type="Proteomes" id="UP000002494">
    <property type="component" value="Unplaced"/>
</dbReference>
<dbReference type="GO" id="GO:0030424">
    <property type="term" value="C:axon"/>
    <property type="evidence" value="ECO:0000314"/>
    <property type="project" value="RGD"/>
</dbReference>
<dbReference type="GO" id="GO:0005737">
    <property type="term" value="C:cytoplasm"/>
    <property type="evidence" value="ECO:0000318"/>
    <property type="project" value="GO_Central"/>
</dbReference>
<dbReference type="GO" id="GO:0030425">
    <property type="term" value="C:dendrite"/>
    <property type="evidence" value="ECO:0000314"/>
    <property type="project" value="RGD"/>
</dbReference>
<dbReference type="GO" id="GO:0030426">
    <property type="term" value="C:growth cone"/>
    <property type="evidence" value="ECO:0000314"/>
    <property type="project" value="RGD"/>
</dbReference>
<dbReference type="GO" id="GO:0005871">
    <property type="term" value="C:kinesin complex"/>
    <property type="evidence" value="ECO:0000318"/>
    <property type="project" value="GO_Central"/>
</dbReference>
<dbReference type="GO" id="GO:0005874">
    <property type="term" value="C:microtubule"/>
    <property type="evidence" value="ECO:0000318"/>
    <property type="project" value="GO_Central"/>
</dbReference>
<dbReference type="GO" id="GO:0015630">
    <property type="term" value="C:microtubule cytoskeleton"/>
    <property type="evidence" value="ECO:0000314"/>
    <property type="project" value="MGI"/>
</dbReference>
<dbReference type="GO" id="GO:0035371">
    <property type="term" value="C:microtubule plus-end"/>
    <property type="evidence" value="ECO:0000314"/>
    <property type="project" value="RGD"/>
</dbReference>
<dbReference type="GO" id="GO:0043025">
    <property type="term" value="C:neuronal cell body"/>
    <property type="evidence" value="ECO:0000314"/>
    <property type="project" value="MGI"/>
</dbReference>
<dbReference type="GO" id="GO:0071598">
    <property type="term" value="C:neuronal ribonucleoprotein granule"/>
    <property type="evidence" value="ECO:0000314"/>
    <property type="project" value="MGI"/>
</dbReference>
<dbReference type="GO" id="GO:0008021">
    <property type="term" value="C:synaptic vesicle"/>
    <property type="evidence" value="ECO:0000314"/>
    <property type="project" value="RGD"/>
</dbReference>
<dbReference type="GO" id="GO:0005524">
    <property type="term" value="F:ATP binding"/>
    <property type="evidence" value="ECO:0007669"/>
    <property type="project" value="UniProtKB-KW"/>
</dbReference>
<dbReference type="GO" id="GO:0016887">
    <property type="term" value="F:ATP hydrolysis activity"/>
    <property type="evidence" value="ECO:0000318"/>
    <property type="project" value="GO_Central"/>
</dbReference>
<dbReference type="GO" id="GO:0019894">
    <property type="term" value="F:kinesin binding"/>
    <property type="evidence" value="ECO:0000353"/>
    <property type="project" value="RGD"/>
</dbReference>
<dbReference type="GO" id="GO:0008017">
    <property type="term" value="F:microtubule binding"/>
    <property type="evidence" value="ECO:0000314"/>
    <property type="project" value="RGD"/>
</dbReference>
<dbReference type="GO" id="GO:0003777">
    <property type="term" value="F:microtubule motor activity"/>
    <property type="evidence" value="ECO:0000318"/>
    <property type="project" value="GO_Central"/>
</dbReference>
<dbReference type="GO" id="GO:0007018">
    <property type="term" value="P:microtubule-based movement"/>
    <property type="evidence" value="ECO:0000318"/>
    <property type="project" value="GO_Central"/>
</dbReference>
<dbReference type="GO" id="GO:0010976">
    <property type="term" value="P:positive regulation of neuron projection development"/>
    <property type="evidence" value="ECO:0000315"/>
    <property type="project" value="RGD"/>
</dbReference>
<dbReference type="CDD" id="cd01371">
    <property type="entry name" value="KISc_KIF3"/>
    <property type="match status" value="1"/>
</dbReference>
<dbReference type="Gene3D" id="3.40.850.10">
    <property type="entry name" value="Kinesin motor domain"/>
    <property type="match status" value="1"/>
</dbReference>
<dbReference type="InterPro" id="IPR027640">
    <property type="entry name" value="Kinesin-like_fam"/>
</dbReference>
<dbReference type="InterPro" id="IPR019821">
    <property type="entry name" value="Kinesin_motor_CS"/>
</dbReference>
<dbReference type="InterPro" id="IPR001752">
    <property type="entry name" value="Kinesin_motor_dom"/>
</dbReference>
<dbReference type="InterPro" id="IPR036961">
    <property type="entry name" value="Kinesin_motor_dom_sf"/>
</dbReference>
<dbReference type="InterPro" id="IPR027417">
    <property type="entry name" value="P-loop_NTPase"/>
</dbReference>
<dbReference type="PANTHER" id="PTHR47968">
    <property type="entry name" value="CENTROMERE PROTEIN E"/>
    <property type="match status" value="1"/>
</dbReference>
<dbReference type="PANTHER" id="PTHR47968:SF76">
    <property type="entry name" value="KINESIN-LIKE PROTEIN"/>
    <property type="match status" value="1"/>
</dbReference>
<dbReference type="Pfam" id="PF00225">
    <property type="entry name" value="Kinesin"/>
    <property type="match status" value="2"/>
</dbReference>
<dbReference type="PRINTS" id="PR00380">
    <property type="entry name" value="KINESINHEAVY"/>
</dbReference>
<dbReference type="SMART" id="SM00129">
    <property type="entry name" value="KISc"/>
    <property type="match status" value="1"/>
</dbReference>
<dbReference type="SUPFAM" id="SSF52540">
    <property type="entry name" value="P-loop containing nucleoside triphosphate hydrolases"/>
    <property type="match status" value="1"/>
</dbReference>
<dbReference type="PROSITE" id="PS00411">
    <property type="entry name" value="KINESIN_MOTOR_1"/>
    <property type="match status" value="1"/>
</dbReference>
<dbReference type="PROSITE" id="PS50067">
    <property type="entry name" value="KINESIN_MOTOR_2"/>
    <property type="match status" value="1"/>
</dbReference>
<reference key="1">
    <citation type="journal article" date="1998" name="Mol. Biol. Cell">
        <title>KIF3C and KIF3A form a novel neuronal heteromeric kinesin that associates with membrane vesicles.</title>
        <authorList>
            <person name="Muresan V."/>
            <person name="Abramson T."/>
            <person name="Lyass A."/>
            <person name="Winter D."/>
            <person name="Porro E."/>
            <person name="Hong F."/>
            <person name="Chamberlin N.L."/>
            <person name="Schnapp B.J."/>
        </authorList>
    </citation>
    <scope>NUCLEOTIDE SEQUENCE [MRNA]</scope>
</reference>
<reference key="2">
    <citation type="journal article" date="1998" name="Eur. J. Cell Biol.">
        <title>Identification of kinesin-like molecules in myogenic cells.</title>
        <authorList>
            <person name="Faire K."/>
            <person name="Gruber D."/>
            <person name="Bulinski J.C."/>
        </authorList>
    </citation>
    <scope>NUCLEOTIDE SEQUENCE [MRNA]</scope>
</reference>
<accession>O55165</accession>
<accession>O88657</accession>